<feature type="chain" id="PRO_0000215141" description="Glucokinase">
    <location>
        <begin position="1"/>
        <end position="335"/>
    </location>
</feature>
<feature type="binding site" evidence="1">
    <location>
        <begin position="11"/>
        <end position="16"/>
    </location>
    <ligand>
        <name>ATP</name>
        <dbReference type="ChEBI" id="CHEBI:30616"/>
    </ligand>
</feature>
<accession>Q8PKU2</accession>
<gene>
    <name evidence="1" type="primary">glk</name>
    <name type="ordered locus">XAC2070</name>
</gene>
<keyword id="KW-0067">ATP-binding</keyword>
<keyword id="KW-0963">Cytoplasm</keyword>
<keyword id="KW-0324">Glycolysis</keyword>
<keyword id="KW-0418">Kinase</keyword>
<keyword id="KW-0547">Nucleotide-binding</keyword>
<keyword id="KW-0808">Transferase</keyword>
<organism>
    <name type="scientific">Xanthomonas axonopodis pv. citri (strain 306)</name>
    <dbReference type="NCBI Taxonomy" id="190486"/>
    <lineage>
        <taxon>Bacteria</taxon>
        <taxon>Pseudomonadati</taxon>
        <taxon>Pseudomonadota</taxon>
        <taxon>Gammaproteobacteria</taxon>
        <taxon>Lysobacterales</taxon>
        <taxon>Lysobacteraceae</taxon>
        <taxon>Xanthomonas</taxon>
    </lineage>
</organism>
<protein>
    <recommendedName>
        <fullName evidence="1">Glucokinase</fullName>
        <ecNumber evidence="1">2.7.1.2</ecNumber>
    </recommendedName>
    <alternativeName>
        <fullName evidence="1">Glucose kinase</fullName>
    </alternativeName>
</protein>
<sequence>MTAPSKPVLVADIGGTNARFALADVDASVPLLDDTSREFAVVDFGSLGEAARYYLDQIGVQATQGVFAVAGRVDGDEARITNHPWVISRSRTATMLGFSTLHLINDFAAQAMAISLLRPQDVVQVGGASWRPAPIDQARNYGVIGPGTGLGVGGLIIRNGRCFPLETEGGHVSFPPGTPEEIRILEILSEQFGRVSNERLICGPGLVNIHRALSEIAGVDPGPLQPKDITARAAAGDPRSSRTIDLFCAIFGAIAGDMVLMQGAWDGVFLTGGLVPKVLDSLQHSGFRQRFEHKGRFSAIMSKVPSLAVMHPHAGLLGAAAYAVDAQRQHPGEQR</sequence>
<comment type="catalytic activity">
    <reaction evidence="1">
        <text>D-glucose + ATP = D-glucose 6-phosphate + ADP + H(+)</text>
        <dbReference type="Rhea" id="RHEA:17825"/>
        <dbReference type="ChEBI" id="CHEBI:4167"/>
        <dbReference type="ChEBI" id="CHEBI:15378"/>
        <dbReference type="ChEBI" id="CHEBI:30616"/>
        <dbReference type="ChEBI" id="CHEBI:61548"/>
        <dbReference type="ChEBI" id="CHEBI:456216"/>
        <dbReference type="EC" id="2.7.1.2"/>
    </reaction>
</comment>
<comment type="subcellular location">
    <subcellularLocation>
        <location evidence="1">Cytoplasm</location>
    </subcellularLocation>
</comment>
<comment type="similarity">
    <text evidence="1">Belongs to the bacterial glucokinase family.</text>
</comment>
<reference key="1">
    <citation type="journal article" date="2002" name="Nature">
        <title>Comparison of the genomes of two Xanthomonas pathogens with differing host specificities.</title>
        <authorList>
            <person name="da Silva A.C.R."/>
            <person name="Ferro J.A."/>
            <person name="Reinach F.C."/>
            <person name="Farah C.S."/>
            <person name="Furlan L.R."/>
            <person name="Quaggio R.B."/>
            <person name="Monteiro-Vitorello C.B."/>
            <person name="Van Sluys M.A."/>
            <person name="Almeida N.F. Jr."/>
            <person name="Alves L.M.C."/>
            <person name="do Amaral A.M."/>
            <person name="Bertolini M.C."/>
            <person name="Camargo L.E.A."/>
            <person name="Camarotte G."/>
            <person name="Cannavan F."/>
            <person name="Cardozo J."/>
            <person name="Chambergo F."/>
            <person name="Ciapina L.P."/>
            <person name="Cicarelli R.M.B."/>
            <person name="Coutinho L.L."/>
            <person name="Cursino-Santos J.R."/>
            <person name="El-Dorry H."/>
            <person name="Faria J.B."/>
            <person name="Ferreira A.J.S."/>
            <person name="Ferreira R.C.C."/>
            <person name="Ferro M.I.T."/>
            <person name="Formighieri E.F."/>
            <person name="Franco M.C."/>
            <person name="Greggio C.C."/>
            <person name="Gruber A."/>
            <person name="Katsuyama A.M."/>
            <person name="Kishi L.T."/>
            <person name="Leite R.P."/>
            <person name="Lemos E.G.M."/>
            <person name="Lemos M.V.F."/>
            <person name="Locali E.C."/>
            <person name="Machado M.A."/>
            <person name="Madeira A.M.B.N."/>
            <person name="Martinez-Rossi N.M."/>
            <person name="Martins E.C."/>
            <person name="Meidanis J."/>
            <person name="Menck C.F.M."/>
            <person name="Miyaki C.Y."/>
            <person name="Moon D.H."/>
            <person name="Moreira L.M."/>
            <person name="Novo M.T.M."/>
            <person name="Okura V.K."/>
            <person name="Oliveira M.C."/>
            <person name="Oliveira V.R."/>
            <person name="Pereira H.A."/>
            <person name="Rossi A."/>
            <person name="Sena J.A.D."/>
            <person name="Silva C."/>
            <person name="de Souza R.F."/>
            <person name="Spinola L.A.F."/>
            <person name="Takita M.A."/>
            <person name="Tamura R.E."/>
            <person name="Teixeira E.C."/>
            <person name="Tezza R.I.D."/>
            <person name="Trindade dos Santos M."/>
            <person name="Truffi D."/>
            <person name="Tsai S.M."/>
            <person name="White F.F."/>
            <person name="Setubal J.C."/>
            <person name="Kitajima J.P."/>
        </authorList>
    </citation>
    <scope>NUCLEOTIDE SEQUENCE [LARGE SCALE GENOMIC DNA]</scope>
    <source>
        <strain>306</strain>
    </source>
</reference>
<evidence type="ECO:0000255" key="1">
    <source>
        <dbReference type="HAMAP-Rule" id="MF_00524"/>
    </source>
</evidence>
<proteinExistence type="inferred from homology"/>
<dbReference type="EC" id="2.7.1.2" evidence="1"/>
<dbReference type="EMBL" id="AE008923">
    <property type="protein sequence ID" value="AAM36927.1"/>
    <property type="molecule type" value="Genomic_DNA"/>
</dbReference>
<dbReference type="RefSeq" id="WP_005929801.1">
    <property type="nucleotide sequence ID" value="NC_003919.1"/>
</dbReference>
<dbReference type="SMR" id="Q8PKU2"/>
<dbReference type="GeneID" id="97510556"/>
<dbReference type="KEGG" id="xac:XAC2070"/>
<dbReference type="eggNOG" id="COG0837">
    <property type="taxonomic scope" value="Bacteria"/>
</dbReference>
<dbReference type="HOGENOM" id="CLU_042582_1_0_6"/>
<dbReference type="Proteomes" id="UP000000576">
    <property type="component" value="Chromosome"/>
</dbReference>
<dbReference type="GO" id="GO:0005829">
    <property type="term" value="C:cytosol"/>
    <property type="evidence" value="ECO:0007669"/>
    <property type="project" value="TreeGrafter"/>
</dbReference>
<dbReference type="GO" id="GO:0005524">
    <property type="term" value="F:ATP binding"/>
    <property type="evidence" value="ECO:0007669"/>
    <property type="project" value="UniProtKB-UniRule"/>
</dbReference>
<dbReference type="GO" id="GO:0005536">
    <property type="term" value="F:D-glucose binding"/>
    <property type="evidence" value="ECO:0007669"/>
    <property type="project" value="InterPro"/>
</dbReference>
<dbReference type="GO" id="GO:0004340">
    <property type="term" value="F:glucokinase activity"/>
    <property type="evidence" value="ECO:0007669"/>
    <property type="project" value="UniProtKB-UniRule"/>
</dbReference>
<dbReference type="GO" id="GO:0006096">
    <property type="term" value="P:glycolytic process"/>
    <property type="evidence" value="ECO:0007669"/>
    <property type="project" value="UniProtKB-UniRule"/>
</dbReference>
<dbReference type="CDD" id="cd24008">
    <property type="entry name" value="ASKHA_NBD_GLK"/>
    <property type="match status" value="1"/>
</dbReference>
<dbReference type="FunFam" id="3.40.367.20:FF:000007">
    <property type="entry name" value="Glucokinase"/>
    <property type="match status" value="1"/>
</dbReference>
<dbReference type="Gene3D" id="3.30.420.40">
    <property type="match status" value="1"/>
</dbReference>
<dbReference type="Gene3D" id="3.40.367.20">
    <property type="match status" value="1"/>
</dbReference>
<dbReference type="HAMAP" id="MF_00524">
    <property type="entry name" value="Glucokinase"/>
    <property type="match status" value="1"/>
</dbReference>
<dbReference type="InterPro" id="IPR043129">
    <property type="entry name" value="ATPase_NBD"/>
</dbReference>
<dbReference type="InterPro" id="IPR050201">
    <property type="entry name" value="Bacterial_glucokinase"/>
</dbReference>
<dbReference type="InterPro" id="IPR003836">
    <property type="entry name" value="Glucokinase"/>
</dbReference>
<dbReference type="NCBIfam" id="TIGR00749">
    <property type="entry name" value="glk"/>
    <property type="match status" value="1"/>
</dbReference>
<dbReference type="PANTHER" id="PTHR47690">
    <property type="entry name" value="GLUCOKINASE"/>
    <property type="match status" value="1"/>
</dbReference>
<dbReference type="PANTHER" id="PTHR47690:SF1">
    <property type="entry name" value="GLUCOKINASE"/>
    <property type="match status" value="1"/>
</dbReference>
<dbReference type="Pfam" id="PF02685">
    <property type="entry name" value="Glucokinase"/>
    <property type="match status" value="1"/>
</dbReference>
<dbReference type="SUPFAM" id="SSF53067">
    <property type="entry name" value="Actin-like ATPase domain"/>
    <property type="match status" value="1"/>
</dbReference>
<name>GLK_XANAC</name>